<reference key="1">
    <citation type="journal article" date="2010" name="Genome Biol.">
        <title>Structure and dynamics of the pan-genome of Streptococcus pneumoniae and closely related species.</title>
        <authorList>
            <person name="Donati C."/>
            <person name="Hiller N.L."/>
            <person name="Tettelin H."/>
            <person name="Muzzi A."/>
            <person name="Croucher N.J."/>
            <person name="Angiuoli S.V."/>
            <person name="Oggioni M."/>
            <person name="Dunning Hotopp J.C."/>
            <person name="Hu F.Z."/>
            <person name="Riley D.R."/>
            <person name="Covacci A."/>
            <person name="Mitchell T.J."/>
            <person name="Bentley S.D."/>
            <person name="Kilian M."/>
            <person name="Ehrlich G.D."/>
            <person name="Rappuoli R."/>
            <person name="Moxon E.R."/>
            <person name="Masignani V."/>
        </authorList>
    </citation>
    <scope>NUCLEOTIDE SEQUENCE [LARGE SCALE GENOMIC DNA]</scope>
    <source>
        <strain>Hungary19A-6</strain>
    </source>
</reference>
<proteinExistence type="inferred from homology"/>
<comment type="function">
    <text evidence="1">Necessary for efficient RNA polymerase transcription elongation past template-encoded arresting sites. The arresting sites in DNA have the property of trapping a certain fraction of elongating RNA polymerases that pass through, resulting in locked ternary complexes. Cleavage of the nascent transcript by cleavage factors such as GreA or GreB allows the resumption of elongation from the new 3'terminus. GreA releases sequences of 2 to 3 nucleotides.</text>
</comment>
<comment type="similarity">
    <text evidence="1">Belongs to the GreA/GreB family.</text>
</comment>
<evidence type="ECO:0000255" key="1">
    <source>
        <dbReference type="HAMAP-Rule" id="MF_00105"/>
    </source>
</evidence>
<keyword id="KW-0175">Coiled coil</keyword>
<keyword id="KW-0238">DNA-binding</keyword>
<keyword id="KW-0804">Transcription</keyword>
<keyword id="KW-0805">Transcription regulation</keyword>
<sequence length="160" mass="17588">MAEKTYPMTLEEKEKLEKELEELKLVRRPEVVERIKIARSYGDLSENSEYEAAKDEQAFVEGQISSLETKIRYAEIVNSDAVAQDEVAIGKTVTIQEIGEDEEEVYIIVGSAGADAFAGKVSNESPIGQDLIGKKTGDTATIETPVGSYDVKILKVEKTA</sequence>
<protein>
    <recommendedName>
        <fullName evidence="1">Transcription elongation factor GreA</fullName>
    </recommendedName>
    <alternativeName>
        <fullName evidence="1">Transcript cleavage factor GreA</fullName>
    </alternativeName>
</protein>
<feature type="chain" id="PRO_1000094200" description="Transcription elongation factor GreA">
    <location>
        <begin position="1"/>
        <end position="160"/>
    </location>
</feature>
<feature type="coiled-coil region" evidence="1">
    <location>
        <begin position="1"/>
        <end position="72"/>
    </location>
</feature>
<name>GREA_STRPI</name>
<accession>B1ICT9</accession>
<dbReference type="EMBL" id="CP000936">
    <property type="protein sequence ID" value="ACA37280.1"/>
    <property type="molecule type" value="Genomic_DNA"/>
</dbReference>
<dbReference type="RefSeq" id="WP_000818761.1">
    <property type="nucleotide sequence ID" value="NC_010380.1"/>
</dbReference>
<dbReference type="SMR" id="B1ICT9"/>
<dbReference type="KEGG" id="spv:SPH_1629"/>
<dbReference type="HOGENOM" id="CLU_101379_2_1_9"/>
<dbReference type="Proteomes" id="UP000002163">
    <property type="component" value="Chromosome"/>
</dbReference>
<dbReference type="GO" id="GO:0003677">
    <property type="term" value="F:DNA binding"/>
    <property type="evidence" value="ECO:0007669"/>
    <property type="project" value="UniProtKB-UniRule"/>
</dbReference>
<dbReference type="GO" id="GO:0070063">
    <property type="term" value="F:RNA polymerase binding"/>
    <property type="evidence" value="ECO:0007669"/>
    <property type="project" value="InterPro"/>
</dbReference>
<dbReference type="GO" id="GO:0006354">
    <property type="term" value="P:DNA-templated transcription elongation"/>
    <property type="evidence" value="ECO:0007669"/>
    <property type="project" value="TreeGrafter"/>
</dbReference>
<dbReference type="GO" id="GO:0032784">
    <property type="term" value="P:regulation of DNA-templated transcription elongation"/>
    <property type="evidence" value="ECO:0007669"/>
    <property type="project" value="UniProtKB-UniRule"/>
</dbReference>
<dbReference type="FunFam" id="1.10.287.180:FF:000001">
    <property type="entry name" value="Transcription elongation factor GreA"/>
    <property type="match status" value="1"/>
</dbReference>
<dbReference type="FunFam" id="3.10.50.30:FF:000001">
    <property type="entry name" value="Transcription elongation factor GreA"/>
    <property type="match status" value="1"/>
</dbReference>
<dbReference type="Gene3D" id="3.10.50.30">
    <property type="entry name" value="Transcription elongation factor, GreA/GreB, C-terminal domain"/>
    <property type="match status" value="1"/>
</dbReference>
<dbReference type="Gene3D" id="1.10.287.180">
    <property type="entry name" value="Transcription elongation factor, GreA/GreB, N-terminal domain"/>
    <property type="match status" value="1"/>
</dbReference>
<dbReference type="HAMAP" id="MF_00105">
    <property type="entry name" value="GreA_GreB"/>
    <property type="match status" value="1"/>
</dbReference>
<dbReference type="InterPro" id="IPR036953">
    <property type="entry name" value="GreA/GreB_C_sf"/>
</dbReference>
<dbReference type="InterPro" id="IPR018151">
    <property type="entry name" value="TF_GreA/GreB_CS"/>
</dbReference>
<dbReference type="InterPro" id="IPR006359">
    <property type="entry name" value="Tscrpt_elong_fac_GreA"/>
</dbReference>
<dbReference type="InterPro" id="IPR028624">
    <property type="entry name" value="Tscrpt_elong_fac_GreA/B"/>
</dbReference>
<dbReference type="InterPro" id="IPR001437">
    <property type="entry name" value="Tscrpt_elong_fac_GreA/B_C"/>
</dbReference>
<dbReference type="InterPro" id="IPR023459">
    <property type="entry name" value="Tscrpt_elong_fac_GreA/B_fam"/>
</dbReference>
<dbReference type="InterPro" id="IPR022691">
    <property type="entry name" value="Tscrpt_elong_fac_GreA/B_N"/>
</dbReference>
<dbReference type="InterPro" id="IPR036805">
    <property type="entry name" value="Tscrpt_elong_fac_GreA/B_N_sf"/>
</dbReference>
<dbReference type="NCBIfam" id="TIGR01462">
    <property type="entry name" value="greA"/>
    <property type="match status" value="1"/>
</dbReference>
<dbReference type="NCBIfam" id="NF001260">
    <property type="entry name" value="PRK00226.1-1"/>
    <property type="match status" value="1"/>
</dbReference>
<dbReference type="NCBIfam" id="NF001263">
    <property type="entry name" value="PRK00226.1-4"/>
    <property type="match status" value="1"/>
</dbReference>
<dbReference type="PANTHER" id="PTHR30437">
    <property type="entry name" value="TRANSCRIPTION ELONGATION FACTOR GREA"/>
    <property type="match status" value="1"/>
</dbReference>
<dbReference type="PANTHER" id="PTHR30437:SF4">
    <property type="entry name" value="TRANSCRIPTION ELONGATION FACTOR GREA"/>
    <property type="match status" value="1"/>
</dbReference>
<dbReference type="Pfam" id="PF01272">
    <property type="entry name" value="GreA_GreB"/>
    <property type="match status" value="1"/>
</dbReference>
<dbReference type="Pfam" id="PF03449">
    <property type="entry name" value="GreA_GreB_N"/>
    <property type="match status" value="1"/>
</dbReference>
<dbReference type="PIRSF" id="PIRSF006092">
    <property type="entry name" value="GreA_GreB"/>
    <property type="match status" value="1"/>
</dbReference>
<dbReference type="SUPFAM" id="SSF54534">
    <property type="entry name" value="FKBP-like"/>
    <property type="match status" value="1"/>
</dbReference>
<dbReference type="SUPFAM" id="SSF46557">
    <property type="entry name" value="GreA transcript cleavage protein, N-terminal domain"/>
    <property type="match status" value="1"/>
</dbReference>
<dbReference type="PROSITE" id="PS00829">
    <property type="entry name" value="GREAB_1"/>
    <property type="match status" value="1"/>
</dbReference>
<gene>
    <name evidence="1" type="primary">greA</name>
    <name type="ordered locus">SPH_1629</name>
</gene>
<organism>
    <name type="scientific">Streptococcus pneumoniae (strain Hungary19A-6)</name>
    <dbReference type="NCBI Taxonomy" id="487214"/>
    <lineage>
        <taxon>Bacteria</taxon>
        <taxon>Bacillati</taxon>
        <taxon>Bacillota</taxon>
        <taxon>Bacilli</taxon>
        <taxon>Lactobacillales</taxon>
        <taxon>Streptococcaceae</taxon>
        <taxon>Streptococcus</taxon>
    </lineage>
</organism>